<comment type="function">
    <text evidence="1">Ligates lysine onto the cytidine present at position 34 of the AUA codon-specific tRNA(Ile) that contains the anticodon CAU, in an ATP-dependent manner. Cytidine is converted to lysidine, thus changing the amino acid specificity of the tRNA from methionine to isoleucine.</text>
</comment>
<comment type="catalytic activity">
    <reaction evidence="1">
        <text>cytidine(34) in tRNA(Ile2) + L-lysine + ATP = lysidine(34) in tRNA(Ile2) + AMP + diphosphate + H(+)</text>
        <dbReference type="Rhea" id="RHEA:43744"/>
        <dbReference type="Rhea" id="RHEA-COMP:10625"/>
        <dbReference type="Rhea" id="RHEA-COMP:10670"/>
        <dbReference type="ChEBI" id="CHEBI:15378"/>
        <dbReference type="ChEBI" id="CHEBI:30616"/>
        <dbReference type="ChEBI" id="CHEBI:32551"/>
        <dbReference type="ChEBI" id="CHEBI:33019"/>
        <dbReference type="ChEBI" id="CHEBI:82748"/>
        <dbReference type="ChEBI" id="CHEBI:83665"/>
        <dbReference type="ChEBI" id="CHEBI:456215"/>
        <dbReference type="EC" id="6.3.4.19"/>
    </reaction>
</comment>
<comment type="subcellular location">
    <subcellularLocation>
        <location evidence="1">Cytoplasm</location>
    </subcellularLocation>
</comment>
<comment type="domain">
    <text>The N-terminal region contains the highly conserved SGGXDS motif, predicted to be a P-loop motif involved in ATP binding.</text>
</comment>
<comment type="similarity">
    <text evidence="1">Belongs to the tRNA(Ile)-lysidine synthase family.</text>
</comment>
<accession>A8B000</accession>
<reference key="1">
    <citation type="journal article" date="2007" name="J. Bacteriol.">
        <title>Genome-wide transcriptional changes in Streptococcus gordonii in response to competence signaling peptide.</title>
        <authorList>
            <person name="Vickerman M.M."/>
            <person name="Iobst S."/>
            <person name="Jesionowski A.M."/>
            <person name="Gill S.R."/>
        </authorList>
    </citation>
    <scope>NUCLEOTIDE SEQUENCE [LARGE SCALE GENOMIC DNA]</scope>
    <source>
        <strain>Challis / ATCC 35105 / BCRC 15272 / CH1 / DL1 / V288</strain>
    </source>
</reference>
<proteinExistence type="inferred from homology"/>
<evidence type="ECO:0000255" key="1">
    <source>
        <dbReference type="HAMAP-Rule" id="MF_01161"/>
    </source>
</evidence>
<dbReference type="EC" id="6.3.4.19" evidence="1"/>
<dbReference type="EMBL" id="CP000725">
    <property type="protein sequence ID" value="ABV09894.1"/>
    <property type="molecule type" value="Genomic_DNA"/>
</dbReference>
<dbReference type="RefSeq" id="WP_012131070.1">
    <property type="nucleotide sequence ID" value="NC_009785.1"/>
</dbReference>
<dbReference type="SMR" id="A8B000"/>
<dbReference type="STRING" id="467705.SGO_2135"/>
<dbReference type="KEGG" id="sgo:SGO_2135"/>
<dbReference type="eggNOG" id="COG0037">
    <property type="taxonomic scope" value="Bacteria"/>
</dbReference>
<dbReference type="HOGENOM" id="CLU_018869_0_2_9"/>
<dbReference type="Proteomes" id="UP000001131">
    <property type="component" value="Chromosome"/>
</dbReference>
<dbReference type="GO" id="GO:0005737">
    <property type="term" value="C:cytoplasm"/>
    <property type="evidence" value="ECO:0007669"/>
    <property type="project" value="UniProtKB-SubCell"/>
</dbReference>
<dbReference type="GO" id="GO:0005524">
    <property type="term" value="F:ATP binding"/>
    <property type="evidence" value="ECO:0007669"/>
    <property type="project" value="UniProtKB-UniRule"/>
</dbReference>
<dbReference type="GO" id="GO:0032267">
    <property type="term" value="F:tRNA(Ile)-lysidine synthase activity"/>
    <property type="evidence" value="ECO:0007669"/>
    <property type="project" value="UniProtKB-EC"/>
</dbReference>
<dbReference type="GO" id="GO:0006400">
    <property type="term" value="P:tRNA modification"/>
    <property type="evidence" value="ECO:0007669"/>
    <property type="project" value="UniProtKB-UniRule"/>
</dbReference>
<dbReference type="CDD" id="cd01992">
    <property type="entry name" value="TilS_N"/>
    <property type="match status" value="1"/>
</dbReference>
<dbReference type="Gene3D" id="3.40.50.620">
    <property type="entry name" value="HUPs"/>
    <property type="match status" value="1"/>
</dbReference>
<dbReference type="HAMAP" id="MF_01161">
    <property type="entry name" value="tRNA_Ile_lys_synt"/>
    <property type="match status" value="1"/>
</dbReference>
<dbReference type="InterPro" id="IPR012796">
    <property type="entry name" value="Lysidine-tRNA-synth_C"/>
</dbReference>
<dbReference type="InterPro" id="IPR014729">
    <property type="entry name" value="Rossmann-like_a/b/a_fold"/>
</dbReference>
<dbReference type="InterPro" id="IPR011063">
    <property type="entry name" value="TilS/TtcA_N"/>
</dbReference>
<dbReference type="InterPro" id="IPR012094">
    <property type="entry name" value="tRNA_Ile_lys_synt"/>
</dbReference>
<dbReference type="InterPro" id="IPR012795">
    <property type="entry name" value="tRNA_Ile_lys_synt_N"/>
</dbReference>
<dbReference type="NCBIfam" id="TIGR02433">
    <property type="entry name" value="lysidine_TilS_C"/>
    <property type="match status" value="1"/>
</dbReference>
<dbReference type="NCBIfam" id="TIGR02432">
    <property type="entry name" value="lysidine_TilS_N"/>
    <property type="match status" value="1"/>
</dbReference>
<dbReference type="PANTHER" id="PTHR43033">
    <property type="entry name" value="TRNA(ILE)-LYSIDINE SYNTHASE-RELATED"/>
    <property type="match status" value="1"/>
</dbReference>
<dbReference type="PANTHER" id="PTHR43033:SF1">
    <property type="entry name" value="TRNA(ILE)-LYSIDINE SYNTHASE-RELATED"/>
    <property type="match status" value="1"/>
</dbReference>
<dbReference type="Pfam" id="PF01171">
    <property type="entry name" value="ATP_bind_3"/>
    <property type="match status" value="1"/>
</dbReference>
<dbReference type="SMART" id="SM00977">
    <property type="entry name" value="TilS_C"/>
    <property type="match status" value="1"/>
</dbReference>
<dbReference type="SUPFAM" id="SSF52402">
    <property type="entry name" value="Adenine nucleotide alpha hydrolases-like"/>
    <property type="match status" value="1"/>
</dbReference>
<dbReference type="SUPFAM" id="SSF56037">
    <property type="entry name" value="PheT/TilS domain"/>
    <property type="match status" value="1"/>
</dbReference>
<name>TILS_STRGC</name>
<gene>
    <name evidence="1" type="primary">tilS</name>
    <name type="ordered locus">SGO_2135</name>
</gene>
<sequence length="425" mass="49841">MIEQQFLKQCKEKAYFIEHQRVLLAISGGLDSMTLLNLLYKYQKELDIELILAHINHKQRIEADQEEKQLKEIAQKLGVKILTSSFSGVFSEKSARDFRYNFFKKVMQEEDCTALVTAHHADDQAETIFMRILRGSRLRYLSGMKDRQPFGGGELIRPLLEFSKTDFPTVFHFEDASNFENTYFRNRVRNHYFPLLETENPRIKQAIINLGTEIAQLQKALSDLTKDLNQTDLQTFRKQKREVQVFLLQEYLEKFPDLQLSKAQFDEILHILNTKANYHHYLKNQYELIQDYQTFKIQKIGPKSDSKKDAILLQFEDIIELDNFCFSFGKELVGGVVQMIPVSRKTSIVLRHRQSGDRIVLNGHHKKLARYFIDEKYSLQERDEAIIVEQFNEILGIAGIVTSDLSKNSKRDIMKDILYIKKIDR</sequence>
<feature type="chain" id="PRO_1000085372" description="tRNA(Ile)-lysidine synthase">
    <location>
        <begin position="1"/>
        <end position="425"/>
    </location>
</feature>
<feature type="binding site" evidence="1">
    <location>
        <begin position="27"/>
        <end position="32"/>
    </location>
    <ligand>
        <name>ATP</name>
        <dbReference type="ChEBI" id="CHEBI:30616"/>
    </ligand>
</feature>
<protein>
    <recommendedName>
        <fullName evidence="1">tRNA(Ile)-lysidine synthase</fullName>
        <ecNumber evidence="1">6.3.4.19</ecNumber>
    </recommendedName>
    <alternativeName>
        <fullName evidence="1">tRNA(Ile)-2-lysyl-cytidine synthase</fullName>
    </alternativeName>
    <alternativeName>
        <fullName evidence="1">tRNA(Ile)-lysidine synthetase</fullName>
    </alternativeName>
</protein>
<keyword id="KW-0067">ATP-binding</keyword>
<keyword id="KW-0963">Cytoplasm</keyword>
<keyword id="KW-0436">Ligase</keyword>
<keyword id="KW-0547">Nucleotide-binding</keyword>
<keyword id="KW-1185">Reference proteome</keyword>
<keyword id="KW-0819">tRNA processing</keyword>
<organism>
    <name type="scientific">Streptococcus gordonii (strain Challis / ATCC 35105 / BCRC 15272 / CH1 / DL1 / V288)</name>
    <dbReference type="NCBI Taxonomy" id="467705"/>
    <lineage>
        <taxon>Bacteria</taxon>
        <taxon>Bacillati</taxon>
        <taxon>Bacillota</taxon>
        <taxon>Bacilli</taxon>
        <taxon>Lactobacillales</taxon>
        <taxon>Streptococcaceae</taxon>
        <taxon>Streptococcus</taxon>
    </lineage>
</organism>